<reference key="1">
    <citation type="journal article" date="2008" name="PLoS Genet.">
        <title>Complete genome sequence of the N2-fixing broad host range endophyte Klebsiella pneumoniae 342 and virulence predictions verified in mice.</title>
        <authorList>
            <person name="Fouts D.E."/>
            <person name="Tyler H.L."/>
            <person name="DeBoy R.T."/>
            <person name="Daugherty S."/>
            <person name="Ren Q."/>
            <person name="Badger J.H."/>
            <person name="Durkin A.S."/>
            <person name="Huot H."/>
            <person name="Shrivastava S."/>
            <person name="Kothari S."/>
            <person name="Dodson R.J."/>
            <person name="Mohamoud Y."/>
            <person name="Khouri H."/>
            <person name="Roesch L.F.W."/>
            <person name="Krogfelt K.A."/>
            <person name="Struve C."/>
            <person name="Triplett E.W."/>
            <person name="Methe B.A."/>
        </authorList>
    </citation>
    <scope>NUCLEOTIDE SEQUENCE [LARGE SCALE GENOMIC DNA]</scope>
    <source>
        <strain>342</strain>
    </source>
</reference>
<feature type="chain" id="PRO_1000144141" description="Large ribosomal subunit protein uL13">
    <location>
        <begin position="1"/>
        <end position="142"/>
    </location>
</feature>
<evidence type="ECO:0000255" key="1">
    <source>
        <dbReference type="HAMAP-Rule" id="MF_01366"/>
    </source>
</evidence>
<evidence type="ECO:0000305" key="2"/>
<dbReference type="EMBL" id="CP000964">
    <property type="protein sequence ID" value="ACI08812.1"/>
    <property type="molecule type" value="Genomic_DNA"/>
</dbReference>
<dbReference type="SMR" id="B5XSS1"/>
<dbReference type="KEGG" id="kpe:KPK_0491"/>
<dbReference type="HOGENOM" id="CLU_082184_2_2_6"/>
<dbReference type="Proteomes" id="UP000001734">
    <property type="component" value="Chromosome"/>
</dbReference>
<dbReference type="GO" id="GO:0022625">
    <property type="term" value="C:cytosolic large ribosomal subunit"/>
    <property type="evidence" value="ECO:0007669"/>
    <property type="project" value="TreeGrafter"/>
</dbReference>
<dbReference type="GO" id="GO:0003729">
    <property type="term" value="F:mRNA binding"/>
    <property type="evidence" value="ECO:0007669"/>
    <property type="project" value="TreeGrafter"/>
</dbReference>
<dbReference type="GO" id="GO:0003735">
    <property type="term" value="F:structural constituent of ribosome"/>
    <property type="evidence" value="ECO:0007669"/>
    <property type="project" value="InterPro"/>
</dbReference>
<dbReference type="GO" id="GO:0017148">
    <property type="term" value="P:negative regulation of translation"/>
    <property type="evidence" value="ECO:0007669"/>
    <property type="project" value="TreeGrafter"/>
</dbReference>
<dbReference type="GO" id="GO:0006412">
    <property type="term" value="P:translation"/>
    <property type="evidence" value="ECO:0007669"/>
    <property type="project" value="UniProtKB-UniRule"/>
</dbReference>
<dbReference type="CDD" id="cd00392">
    <property type="entry name" value="Ribosomal_L13"/>
    <property type="match status" value="1"/>
</dbReference>
<dbReference type="FunFam" id="3.90.1180.10:FF:000001">
    <property type="entry name" value="50S ribosomal protein L13"/>
    <property type="match status" value="1"/>
</dbReference>
<dbReference type="Gene3D" id="3.90.1180.10">
    <property type="entry name" value="Ribosomal protein L13"/>
    <property type="match status" value="1"/>
</dbReference>
<dbReference type="HAMAP" id="MF_01366">
    <property type="entry name" value="Ribosomal_uL13"/>
    <property type="match status" value="1"/>
</dbReference>
<dbReference type="InterPro" id="IPR005822">
    <property type="entry name" value="Ribosomal_uL13"/>
</dbReference>
<dbReference type="InterPro" id="IPR005823">
    <property type="entry name" value="Ribosomal_uL13_bac-type"/>
</dbReference>
<dbReference type="InterPro" id="IPR023563">
    <property type="entry name" value="Ribosomal_uL13_CS"/>
</dbReference>
<dbReference type="InterPro" id="IPR036899">
    <property type="entry name" value="Ribosomal_uL13_sf"/>
</dbReference>
<dbReference type="NCBIfam" id="TIGR01066">
    <property type="entry name" value="rplM_bact"/>
    <property type="match status" value="1"/>
</dbReference>
<dbReference type="PANTHER" id="PTHR11545:SF2">
    <property type="entry name" value="LARGE RIBOSOMAL SUBUNIT PROTEIN UL13M"/>
    <property type="match status" value="1"/>
</dbReference>
<dbReference type="PANTHER" id="PTHR11545">
    <property type="entry name" value="RIBOSOMAL PROTEIN L13"/>
    <property type="match status" value="1"/>
</dbReference>
<dbReference type="Pfam" id="PF00572">
    <property type="entry name" value="Ribosomal_L13"/>
    <property type="match status" value="1"/>
</dbReference>
<dbReference type="PIRSF" id="PIRSF002181">
    <property type="entry name" value="Ribosomal_L13"/>
    <property type="match status" value="1"/>
</dbReference>
<dbReference type="SUPFAM" id="SSF52161">
    <property type="entry name" value="Ribosomal protein L13"/>
    <property type="match status" value="1"/>
</dbReference>
<dbReference type="PROSITE" id="PS00783">
    <property type="entry name" value="RIBOSOMAL_L13"/>
    <property type="match status" value="1"/>
</dbReference>
<keyword id="KW-0687">Ribonucleoprotein</keyword>
<keyword id="KW-0689">Ribosomal protein</keyword>
<accession>B5XSS1</accession>
<organism>
    <name type="scientific">Klebsiella pneumoniae (strain 342)</name>
    <dbReference type="NCBI Taxonomy" id="507522"/>
    <lineage>
        <taxon>Bacteria</taxon>
        <taxon>Pseudomonadati</taxon>
        <taxon>Pseudomonadota</taxon>
        <taxon>Gammaproteobacteria</taxon>
        <taxon>Enterobacterales</taxon>
        <taxon>Enterobacteriaceae</taxon>
        <taxon>Klebsiella/Raoultella group</taxon>
        <taxon>Klebsiella</taxon>
        <taxon>Klebsiella pneumoniae complex</taxon>
    </lineage>
</organism>
<proteinExistence type="inferred from homology"/>
<comment type="function">
    <text evidence="1">This protein is one of the early assembly proteins of the 50S ribosomal subunit, although it is not seen to bind rRNA by itself. It is important during the early stages of 50S assembly.</text>
</comment>
<comment type="subunit">
    <text evidence="1">Part of the 50S ribosomal subunit.</text>
</comment>
<comment type="similarity">
    <text evidence="1">Belongs to the universal ribosomal protein uL13 family.</text>
</comment>
<name>RL13_KLEP3</name>
<protein>
    <recommendedName>
        <fullName evidence="1">Large ribosomal subunit protein uL13</fullName>
    </recommendedName>
    <alternativeName>
        <fullName evidence="2">50S ribosomal protein L13</fullName>
    </alternativeName>
</protein>
<sequence length="142" mass="16110">MKTFTAKPETVKRDWYVVDATGKTLGRLATELARRLRGKHKAEYTPHVDTGDYIIVLNAEKVAVTGNKREDKMYYHHTGHIGGIKEATFEEMIARRPERVIEIAVKGMLPKGPLGRAMYRKLKVYAGNEHNHAAQQPQVLDI</sequence>
<gene>
    <name evidence="1" type="primary">rplM</name>
    <name type="ordered locus">KPK_0491</name>
</gene>